<feature type="chain" id="PRO_0000441608" description="Protein DMP1">
    <location>
        <begin position="1"/>
        <end position="207"/>
    </location>
</feature>
<feature type="transmembrane region" description="Helical" evidence="1">
    <location>
        <begin position="33"/>
        <end position="53"/>
    </location>
</feature>
<feature type="transmembrane region" description="Helical" evidence="1">
    <location>
        <begin position="64"/>
        <end position="84"/>
    </location>
</feature>
<feature type="transmembrane region" description="Helical" evidence="1">
    <location>
        <begin position="121"/>
        <end position="141"/>
    </location>
</feature>
<feature type="transmembrane region" description="Helical" evidence="1">
    <location>
        <begin position="159"/>
        <end position="179"/>
    </location>
</feature>
<feature type="region of interest" description="Disordered" evidence="2">
    <location>
        <begin position="1"/>
        <end position="20"/>
    </location>
</feature>
<gene>
    <name evidence="5" type="primary">DMP1</name>
    <name evidence="7" type="ordered locus">At3g21520</name>
    <name evidence="8" type="ORF">MIL23.9</name>
</gene>
<name>DMP1_ARATH</name>
<evidence type="ECO:0000255" key="1"/>
<evidence type="ECO:0000256" key="2">
    <source>
        <dbReference type="SAM" id="MobiDB-lite"/>
    </source>
</evidence>
<evidence type="ECO:0000269" key="3">
    <source>
    </source>
</evidence>
<evidence type="ECO:0000269" key="4">
    <source>
    </source>
</evidence>
<evidence type="ECO:0000303" key="5">
    <source>
    </source>
</evidence>
<evidence type="ECO:0000305" key="6"/>
<evidence type="ECO:0000312" key="7">
    <source>
        <dbReference type="Araport" id="AT3G21520"/>
    </source>
</evidence>
<evidence type="ECO:0000312" key="8">
    <source>
        <dbReference type="EMBL" id="BAB02347.1"/>
    </source>
</evidence>
<proteinExistence type="evidence at transcript level"/>
<dbReference type="EMBL" id="AB019232">
    <property type="protein sequence ID" value="BAB02347.1"/>
    <property type="molecule type" value="Genomic_DNA"/>
</dbReference>
<dbReference type="EMBL" id="CP002686">
    <property type="protein sequence ID" value="AEE76519.1"/>
    <property type="molecule type" value="Genomic_DNA"/>
</dbReference>
<dbReference type="EMBL" id="AY080599">
    <property type="protein sequence ID" value="AAL85010.1"/>
    <property type="molecule type" value="mRNA"/>
</dbReference>
<dbReference type="EMBL" id="AY114034">
    <property type="protein sequence ID" value="AAM45082.1"/>
    <property type="molecule type" value="mRNA"/>
</dbReference>
<dbReference type="RefSeq" id="NP_188789.2">
    <property type="nucleotide sequence ID" value="NM_113047.3"/>
</dbReference>
<dbReference type="FunCoup" id="Q9LVF4">
    <property type="interactions" value="13"/>
</dbReference>
<dbReference type="STRING" id="3702.Q9LVF4"/>
<dbReference type="iPTMnet" id="Q9LVF4"/>
<dbReference type="PaxDb" id="3702-AT3G21520.1"/>
<dbReference type="ProteomicsDB" id="224125"/>
<dbReference type="EnsemblPlants" id="AT3G21520.1">
    <property type="protein sequence ID" value="AT3G21520.1"/>
    <property type="gene ID" value="AT3G21520"/>
</dbReference>
<dbReference type="GeneID" id="821706"/>
<dbReference type="Gramene" id="AT3G21520.1">
    <property type="protein sequence ID" value="AT3G21520.1"/>
    <property type="gene ID" value="AT3G21520"/>
</dbReference>
<dbReference type="KEGG" id="ath:AT3G21520"/>
<dbReference type="Araport" id="AT3G21520"/>
<dbReference type="TAIR" id="AT3G21520">
    <property type="gene designation" value="DMP1"/>
</dbReference>
<dbReference type="eggNOG" id="ENOG502R6TY">
    <property type="taxonomic scope" value="Eukaryota"/>
</dbReference>
<dbReference type="HOGENOM" id="CLU_075936_2_0_1"/>
<dbReference type="InParanoid" id="Q9LVF4"/>
<dbReference type="OMA" id="FIVFPCT"/>
<dbReference type="OrthoDB" id="1928191at2759"/>
<dbReference type="PhylomeDB" id="Q9LVF4"/>
<dbReference type="PRO" id="PR:Q9LVF4"/>
<dbReference type="Proteomes" id="UP000006548">
    <property type="component" value="Chromosome 3"/>
</dbReference>
<dbReference type="ExpressionAtlas" id="Q9LVF4">
    <property type="expression patterns" value="baseline and differential"/>
</dbReference>
<dbReference type="GO" id="GO:0005783">
    <property type="term" value="C:endoplasmic reticulum"/>
    <property type="evidence" value="ECO:0000314"/>
    <property type="project" value="TAIR"/>
</dbReference>
<dbReference type="GO" id="GO:0005789">
    <property type="term" value="C:endoplasmic reticulum membrane"/>
    <property type="evidence" value="ECO:0007669"/>
    <property type="project" value="UniProtKB-SubCell"/>
</dbReference>
<dbReference type="GO" id="GO:0009705">
    <property type="term" value="C:plant-type vacuole membrane"/>
    <property type="evidence" value="ECO:0000314"/>
    <property type="project" value="TAIR"/>
</dbReference>
<dbReference type="GO" id="GO:0010256">
    <property type="term" value="P:endomembrane system organization"/>
    <property type="evidence" value="ECO:0000315"/>
    <property type="project" value="TAIR"/>
</dbReference>
<dbReference type="GO" id="GO:0090158">
    <property type="term" value="P:endoplasmic reticulum membrane organization"/>
    <property type="evidence" value="ECO:0000314"/>
    <property type="project" value="UniProtKB"/>
</dbReference>
<dbReference type="GO" id="GO:0090148">
    <property type="term" value="P:membrane fission"/>
    <property type="evidence" value="ECO:0000314"/>
    <property type="project" value="UniProtKB"/>
</dbReference>
<dbReference type="GO" id="GO:0061025">
    <property type="term" value="P:membrane fusion"/>
    <property type="evidence" value="ECO:0000314"/>
    <property type="project" value="UniProtKB"/>
</dbReference>
<dbReference type="GO" id="GO:0090693">
    <property type="term" value="P:plant organ senescence"/>
    <property type="evidence" value="ECO:0000270"/>
    <property type="project" value="UniProtKB"/>
</dbReference>
<dbReference type="InterPro" id="IPR007770">
    <property type="entry name" value="DMP"/>
</dbReference>
<dbReference type="PANTHER" id="PTHR31621:SF32">
    <property type="entry name" value="PROTEIN DMP1"/>
    <property type="match status" value="1"/>
</dbReference>
<dbReference type="PANTHER" id="PTHR31621">
    <property type="entry name" value="PROTEIN DMP3"/>
    <property type="match status" value="1"/>
</dbReference>
<dbReference type="Pfam" id="PF05078">
    <property type="entry name" value="DUF679"/>
    <property type="match status" value="1"/>
</dbReference>
<organism>
    <name type="scientific">Arabidopsis thaliana</name>
    <name type="common">Mouse-ear cress</name>
    <dbReference type="NCBI Taxonomy" id="3702"/>
    <lineage>
        <taxon>Eukaryota</taxon>
        <taxon>Viridiplantae</taxon>
        <taxon>Streptophyta</taxon>
        <taxon>Embryophyta</taxon>
        <taxon>Tracheophyta</taxon>
        <taxon>Spermatophyta</taxon>
        <taxon>Magnoliopsida</taxon>
        <taxon>eudicotyledons</taxon>
        <taxon>Gunneridae</taxon>
        <taxon>Pentapetalae</taxon>
        <taxon>rosids</taxon>
        <taxon>malvids</taxon>
        <taxon>Brassicales</taxon>
        <taxon>Brassicaceae</taxon>
        <taxon>Camelineae</taxon>
        <taxon>Arabidopsis</taxon>
    </lineage>
</organism>
<accession>Q9LVF4</accession>
<sequence>MSETSLLIPKTNSPASSENMANTNKSLTGLESLIKLLPTGTLFIYLLLNPVLTNDGECSTGNKVMSSILVALCSFSCVFSCFTDSFKGVDGSRKFGIVTKKGLWTYAEPGSVDLSKYKLRIADFVHAGFVLAVFGTLVLLDANTASCFYPRFRETQKTLVMALPPAVGVASATIFALFPSKRSGIGYAPIAEEVGAEEETKKASVSA</sequence>
<reference key="1">
    <citation type="journal article" date="2000" name="DNA Res.">
        <title>Structural analysis of Arabidopsis thaliana chromosome 3. I. Sequence features of the regions of 4,504,864 bp covered by sixty P1 and TAC clones.</title>
        <authorList>
            <person name="Sato S."/>
            <person name="Nakamura Y."/>
            <person name="Kaneko T."/>
            <person name="Katoh T."/>
            <person name="Asamizu E."/>
            <person name="Tabata S."/>
        </authorList>
    </citation>
    <scope>NUCLEOTIDE SEQUENCE [LARGE SCALE GENOMIC DNA]</scope>
    <source>
        <strain>cv. Columbia</strain>
    </source>
</reference>
<reference key="2">
    <citation type="journal article" date="2017" name="Plant J.">
        <title>Araport11: a complete reannotation of the Arabidopsis thaliana reference genome.</title>
        <authorList>
            <person name="Cheng C.Y."/>
            <person name="Krishnakumar V."/>
            <person name="Chan A.P."/>
            <person name="Thibaud-Nissen F."/>
            <person name="Schobel S."/>
            <person name="Town C.D."/>
        </authorList>
    </citation>
    <scope>GENOME REANNOTATION</scope>
    <source>
        <strain>cv. Columbia</strain>
    </source>
</reference>
<reference key="3">
    <citation type="journal article" date="2003" name="Science">
        <title>Empirical analysis of transcriptional activity in the Arabidopsis genome.</title>
        <authorList>
            <person name="Yamada K."/>
            <person name="Lim J."/>
            <person name="Dale J.M."/>
            <person name="Chen H."/>
            <person name="Shinn P."/>
            <person name="Palm C.J."/>
            <person name="Southwick A.M."/>
            <person name="Wu H.C."/>
            <person name="Kim C.J."/>
            <person name="Nguyen M."/>
            <person name="Pham P.K."/>
            <person name="Cheuk R.F."/>
            <person name="Karlin-Newmann G."/>
            <person name="Liu S.X."/>
            <person name="Lam B."/>
            <person name="Sakano H."/>
            <person name="Wu T."/>
            <person name="Yu G."/>
            <person name="Miranda M."/>
            <person name="Quach H.L."/>
            <person name="Tripp M."/>
            <person name="Chang C.H."/>
            <person name="Lee J.M."/>
            <person name="Toriumi M.J."/>
            <person name="Chan M.M."/>
            <person name="Tang C.C."/>
            <person name="Onodera C.S."/>
            <person name="Deng J.M."/>
            <person name="Akiyama K."/>
            <person name="Ansari Y."/>
            <person name="Arakawa T."/>
            <person name="Banh J."/>
            <person name="Banno F."/>
            <person name="Bowser L."/>
            <person name="Brooks S.Y."/>
            <person name="Carninci P."/>
            <person name="Chao Q."/>
            <person name="Choy N."/>
            <person name="Enju A."/>
            <person name="Goldsmith A.D."/>
            <person name="Gurjal M."/>
            <person name="Hansen N.F."/>
            <person name="Hayashizaki Y."/>
            <person name="Johnson-Hopson C."/>
            <person name="Hsuan V.W."/>
            <person name="Iida K."/>
            <person name="Karnes M."/>
            <person name="Khan S."/>
            <person name="Koesema E."/>
            <person name="Ishida J."/>
            <person name="Jiang P.X."/>
            <person name="Jones T."/>
            <person name="Kawai J."/>
            <person name="Kamiya A."/>
            <person name="Meyers C."/>
            <person name="Nakajima M."/>
            <person name="Narusaka M."/>
            <person name="Seki M."/>
            <person name="Sakurai T."/>
            <person name="Satou M."/>
            <person name="Tamse R."/>
            <person name="Vaysberg M."/>
            <person name="Wallender E.K."/>
            <person name="Wong C."/>
            <person name="Yamamura Y."/>
            <person name="Yuan S."/>
            <person name="Shinozaki K."/>
            <person name="Davis R.W."/>
            <person name="Theologis A."/>
            <person name="Ecker J.R."/>
        </authorList>
    </citation>
    <scope>NUCLEOTIDE SEQUENCE [LARGE SCALE MRNA]</scope>
    <source>
        <strain>cv. Columbia</strain>
    </source>
</reference>
<reference key="4">
    <citation type="journal article" date="2010" name="Plant Biol. 12 Suppl.">
        <title>Expression, localisation and phylogeny of a novel family of plant-specific membrane proteins.</title>
        <authorList>
            <person name="Kasaras A."/>
            <person name="Kunze R."/>
        </authorList>
    </citation>
    <scope>DEVELOPMENTAL STAGE</scope>
    <scope>TISSUE SPECIFICITY</scope>
    <scope>SUBCELLULAR LOCATION</scope>
    <scope>GENE FAMILY</scope>
    <scope>NOMENCLATURE</scope>
    <source>
        <strain>cv. Columbia</strain>
    </source>
</reference>
<reference key="5">
    <citation type="journal article" date="2012" name="BMC Plant Biol.">
        <title>Arabidopsis senescence-associated protein DMP1 is involved in membrane remodeling of the ER and tonoplast.</title>
        <authorList>
            <person name="Kasaras A."/>
            <person name="Melzer M."/>
            <person name="Kunze R."/>
        </authorList>
    </citation>
    <scope>FUNCTION</scope>
    <scope>SUBCELLULAR LOCATION</scope>
    <scope>DEVELOPMENTAL STAGE</scope>
    <scope>TISSUE SPECIFICITY</scope>
    <source>
        <strain>cv. Columbia</strain>
    </source>
</reference>
<comment type="function">
    <text evidence="4">Involved in membrane remodeling including fission during breakdown of the endoplasmic reticulum (ER) and the tonoplast during leaf senescence and in membrane fusion during vacuole biogenesis in roots.</text>
</comment>
<comment type="subcellular location">
    <subcellularLocation>
        <location evidence="3 4">Endoplasmic reticulum membrane</location>
        <topology evidence="1">Multi-pass membrane protein</topology>
    </subcellularLocation>
    <subcellularLocation>
        <location evidence="3 4">Vacuole membrane</location>
        <topology evidence="1">Multi-pass membrane protein</topology>
    </subcellularLocation>
</comment>
<comment type="tissue specificity">
    <text evidence="3 4">Expressed in leaves, siliques and roots.</text>
</comment>
<comment type="developmental stage">
    <text evidence="3 4">Accumulates in tissues undergoing senescence (PubMed:20712629, PubMed:22530652). In roots tips, strongly expressed in the cortex undergoing vacuole biogenesis (PubMed:22530652).</text>
</comment>
<comment type="similarity">
    <text evidence="6">Belongs to the plant DMP1 protein family.</text>
</comment>
<protein>
    <recommendedName>
        <fullName evidence="5">Protein DMP1</fullName>
        <shortName evidence="5">AtDMP1</shortName>
    </recommendedName>
</protein>
<keyword id="KW-0256">Endoplasmic reticulum</keyword>
<keyword id="KW-0472">Membrane</keyword>
<keyword id="KW-1185">Reference proteome</keyword>
<keyword id="KW-0812">Transmembrane</keyword>
<keyword id="KW-1133">Transmembrane helix</keyword>
<keyword id="KW-0926">Vacuole</keyword>